<dbReference type="EMBL" id="AL935198">
    <property type="status" value="NOT_ANNOTATED_CDS"/>
    <property type="molecule type" value="Genomic_DNA"/>
</dbReference>
<dbReference type="EMBL" id="BX927338">
    <property type="status" value="NOT_ANNOTATED_CDS"/>
    <property type="molecule type" value="Genomic_DNA"/>
</dbReference>
<dbReference type="EMBL" id="CU984575">
    <property type="status" value="NOT_ANNOTATED_CDS"/>
    <property type="molecule type" value="Genomic_DNA"/>
</dbReference>
<dbReference type="EMBL" id="BC044159">
    <property type="protein sequence ID" value="AAH44159.1"/>
    <property type="molecule type" value="mRNA"/>
</dbReference>
<dbReference type="EMBL" id="BC071500">
    <property type="protein sequence ID" value="AAH71500.1"/>
    <property type="status" value="ALT_SEQ"/>
    <property type="molecule type" value="mRNA"/>
</dbReference>
<dbReference type="EMBL" id="BC165736">
    <property type="protein sequence ID" value="AAI65736.1"/>
    <property type="molecule type" value="mRNA"/>
</dbReference>
<dbReference type="RefSeq" id="NP_998679.1">
    <property type="nucleotide sequence ID" value="NM_213514.1"/>
</dbReference>
<dbReference type="SMR" id="Q803X0"/>
<dbReference type="FunCoup" id="Q803X0">
    <property type="interactions" value="975"/>
</dbReference>
<dbReference type="STRING" id="7955.ENSDARP00000087966"/>
<dbReference type="GlyCosmos" id="Q803X0">
    <property type="glycosylation" value="2 sites, No reported glycans"/>
</dbReference>
<dbReference type="PaxDb" id="7955-ENSDARP00000087966"/>
<dbReference type="Ensembl" id="ENSDART00000097194">
    <property type="protein sequence ID" value="ENSDARP00000087966"/>
    <property type="gene ID" value="ENSDARG00000008153"/>
</dbReference>
<dbReference type="GeneID" id="406835"/>
<dbReference type="KEGG" id="dre:406835"/>
<dbReference type="AGR" id="ZFIN:ZDB-GENE-040426-2918"/>
<dbReference type="CTD" id="256987"/>
<dbReference type="ZFIN" id="ZDB-GENE-040426-2918">
    <property type="gene designation" value="serinc5"/>
</dbReference>
<dbReference type="eggNOG" id="KOG2592">
    <property type="taxonomic scope" value="Eukaryota"/>
</dbReference>
<dbReference type="HOGENOM" id="CLU_029574_5_2_1"/>
<dbReference type="InParanoid" id="Q803X0"/>
<dbReference type="OMA" id="GCTFNKI"/>
<dbReference type="OrthoDB" id="5963193at2759"/>
<dbReference type="PhylomeDB" id="Q803X0"/>
<dbReference type="TreeFam" id="TF312881"/>
<dbReference type="Reactome" id="R-DRE-977347">
    <property type="pathway name" value="Serine biosynthesis"/>
</dbReference>
<dbReference type="PRO" id="PR:Q803X0"/>
<dbReference type="Proteomes" id="UP000000437">
    <property type="component" value="Chromosome 5"/>
</dbReference>
<dbReference type="Bgee" id="ENSDARG00000008153">
    <property type="expression patterns" value="Expressed in tail bud paraxial mesoderm and 44 other cell types or tissues"/>
</dbReference>
<dbReference type="GO" id="GO:0016020">
    <property type="term" value="C:membrane"/>
    <property type="evidence" value="ECO:0000318"/>
    <property type="project" value="GO_Central"/>
</dbReference>
<dbReference type="GO" id="GO:0005886">
    <property type="term" value="C:plasma membrane"/>
    <property type="evidence" value="ECO:0000250"/>
    <property type="project" value="UniProtKB"/>
</dbReference>
<dbReference type="GO" id="GO:0017128">
    <property type="term" value="F:phospholipid scramblase activity"/>
    <property type="evidence" value="ECO:0000250"/>
    <property type="project" value="UniProtKB"/>
</dbReference>
<dbReference type="GO" id="GO:0140374">
    <property type="term" value="P:antiviral innate immune response"/>
    <property type="evidence" value="ECO:0000250"/>
    <property type="project" value="UniProtKB"/>
</dbReference>
<dbReference type="GO" id="GO:0008654">
    <property type="term" value="P:phospholipid biosynthetic process"/>
    <property type="evidence" value="ECO:0007669"/>
    <property type="project" value="UniProtKB-KW"/>
</dbReference>
<dbReference type="GO" id="GO:0017121">
    <property type="term" value="P:plasma membrane phospholipid scrambling"/>
    <property type="evidence" value="ECO:0000250"/>
    <property type="project" value="UniProtKB"/>
</dbReference>
<dbReference type="InterPro" id="IPR005016">
    <property type="entry name" value="TDE1/TMS"/>
</dbReference>
<dbReference type="PANTHER" id="PTHR10383">
    <property type="entry name" value="SERINE INCORPORATOR"/>
    <property type="match status" value="1"/>
</dbReference>
<dbReference type="PANTHER" id="PTHR10383:SF16">
    <property type="entry name" value="SERINE INCORPORATOR 5"/>
    <property type="match status" value="1"/>
</dbReference>
<dbReference type="Pfam" id="PF03348">
    <property type="entry name" value="Serinc"/>
    <property type="match status" value="1"/>
</dbReference>
<organism>
    <name type="scientific">Danio rerio</name>
    <name type="common">Zebrafish</name>
    <name type="synonym">Brachydanio rerio</name>
    <dbReference type="NCBI Taxonomy" id="7955"/>
    <lineage>
        <taxon>Eukaryota</taxon>
        <taxon>Metazoa</taxon>
        <taxon>Chordata</taxon>
        <taxon>Craniata</taxon>
        <taxon>Vertebrata</taxon>
        <taxon>Euteleostomi</taxon>
        <taxon>Actinopterygii</taxon>
        <taxon>Neopterygii</taxon>
        <taxon>Teleostei</taxon>
        <taxon>Ostariophysi</taxon>
        <taxon>Cypriniformes</taxon>
        <taxon>Danionidae</taxon>
        <taxon>Danioninae</taxon>
        <taxon>Danio</taxon>
    </lineage>
</organism>
<comment type="function">
    <text evidence="1 2">Restriction factor required to restrict infectivity of gammaretroviruses: acts by inhibiting an early step of viral infection. Impairs the penetration of the viral particle into the cytoplasm. Non-ATP-dependent, non-specific lipid transporter for phosphatidylserine, phosphatidylcholine, and phosphatidylethanolamine. Functions as a scramblase that flips lipids in both directions across the membrane. Phospholipid scrambling results in gammaretroviral surface exposure of phosphatidylserine and loss of membrane asymmetry, which leads to loss of infectivity (By similarity). Enhances the incorporation of serine into phosphatidylserine and sphingolipids (By similarity).</text>
</comment>
<comment type="catalytic activity">
    <reaction evidence="2">
        <text>a 1,2-diacyl-sn-glycero-3-phospho-L-serine(in) = a 1,2-diacyl-sn-glycero-3-phospho-L-serine(out)</text>
        <dbReference type="Rhea" id="RHEA:38663"/>
        <dbReference type="ChEBI" id="CHEBI:57262"/>
    </reaction>
</comment>
<comment type="catalytic activity">
    <reaction evidence="2">
        <text>a 1,2-diacyl-sn-glycero-3-phosphocholine(in) = a 1,2-diacyl-sn-glycero-3-phosphocholine(out)</text>
        <dbReference type="Rhea" id="RHEA:38571"/>
        <dbReference type="ChEBI" id="CHEBI:57643"/>
    </reaction>
</comment>
<comment type="catalytic activity">
    <reaction evidence="2">
        <text>a 1,2-diacyl-sn-glycero-3-phosphoethanolamine(in) = a 1,2-diacyl-sn-glycero-3-phosphoethanolamine(out)</text>
        <dbReference type="Rhea" id="RHEA:38895"/>
        <dbReference type="ChEBI" id="CHEBI:64612"/>
    </reaction>
</comment>
<comment type="subcellular location">
    <subcellularLocation>
        <location evidence="2">Cell membrane</location>
        <topology evidence="3">Multi-pass membrane protein</topology>
    </subcellularLocation>
    <text evidence="2">Localizes to the cell membrane, where it is efficiently incorporated into budding gammaretrovirus virions and impairs subsequent virion penetration of susceptible target cells.</text>
</comment>
<comment type="similarity">
    <text evidence="5">Belongs to the TDE1 family.</text>
</comment>
<comment type="sequence caution" evidence="5">
    <conflict type="miscellaneous discrepancy">
        <sequence resource="EMBL-CDS" id="AAH71500"/>
    </conflict>
    <text>Contaminating sequence. Potential poly-A sequence.</text>
</comment>
<name>SERC5_DANRE</name>
<reference key="1">
    <citation type="journal article" date="2013" name="Nature">
        <title>The zebrafish reference genome sequence and its relationship to the human genome.</title>
        <authorList>
            <person name="Howe K."/>
            <person name="Clark M.D."/>
            <person name="Torroja C.F."/>
            <person name="Torrance J."/>
            <person name="Berthelot C."/>
            <person name="Muffato M."/>
            <person name="Collins J.E."/>
            <person name="Humphray S."/>
            <person name="McLaren K."/>
            <person name="Matthews L."/>
            <person name="McLaren S."/>
            <person name="Sealy I."/>
            <person name="Caccamo M."/>
            <person name="Churcher C."/>
            <person name="Scott C."/>
            <person name="Barrett J.C."/>
            <person name="Koch R."/>
            <person name="Rauch G.J."/>
            <person name="White S."/>
            <person name="Chow W."/>
            <person name="Kilian B."/>
            <person name="Quintais L.T."/>
            <person name="Guerra-Assuncao J.A."/>
            <person name="Zhou Y."/>
            <person name="Gu Y."/>
            <person name="Yen J."/>
            <person name="Vogel J.H."/>
            <person name="Eyre T."/>
            <person name="Redmond S."/>
            <person name="Banerjee R."/>
            <person name="Chi J."/>
            <person name="Fu B."/>
            <person name="Langley E."/>
            <person name="Maguire S.F."/>
            <person name="Laird G.K."/>
            <person name="Lloyd D."/>
            <person name="Kenyon E."/>
            <person name="Donaldson S."/>
            <person name="Sehra H."/>
            <person name="Almeida-King J."/>
            <person name="Loveland J."/>
            <person name="Trevanion S."/>
            <person name="Jones M."/>
            <person name="Quail M."/>
            <person name="Willey D."/>
            <person name="Hunt A."/>
            <person name="Burton J."/>
            <person name="Sims S."/>
            <person name="McLay K."/>
            <person name="Plumb B."/>
            <person name="Davis J."/>
            <person name="Clee C."/>
            <person name="Oliver K."/>
            <person name="Clark R."/>
            <person name="Riddle C."/>
            <person name="Elliot D."/>
            <person name="Threadgold G."/>
            <person name="Harden G."/>
            <person name="Ware D."/>
            <person name="Begum S."/>
            <person name="Mortimore B."/>
            <person name="Kerry G."/>
            <person name="Heath P."/>
            <person name="Phillimore B."/>
            <person name="Tracey A."/>
            <person name="Corby N."/>
            <person name="Dunn M."/>
            <person name="Johnson C."/>
            <person name="Wood J."/>
            <person name="Clark S."/>
            <person name="Pelan S."/>
            <person name="Griffiths G."/>
            <person name="Smith M."/>
            <person name="Glithero R."/>
            <person name="Howden P."/>
            <person name="Barker N."/>
            <person name="Lloyd C."/>
            <person name="Stevens C."/>
            <person name="Harley J."/>
            <person name="Holt K."/>
            <person name="Panagiotidis G."/>
            <person name="Lovell J."/>
            <person name="Beasley H."/>
            <person name="Henderson C."/>
            <person name="Gordon D."/>
            <person name="Auger K."/>
            <person name="Wright D."/>
            <person name="Collins J."/>
            <person name="Raisen C."/>
            <person name="Dyer L."/>
            <person name="Leung K."/>
            <person name="Robertson L."/>
            <person name="Ambridge K."/>
            <person name="Leongamornlert D."/>
            <person name="McGuire S."/>
            <person name="Gilderthorp R."/>
            <person name="Griffiths C."/>
            <person name="Manthravadi D."/>
            <person name="Nichol S."/>
            <person name="Barker G."/>
            <person name="Whitehead S."/>
            <person name="Kay M."/>
            <person name="Brown J."/>
            <person name="Murnane C."/>
            <person name="Gray E."/>
            <person name="Humphries M."/>
            <person name="Sycamore N."/>
            <person name="Barker D."/>
            <person name="Saunders D."/>
            <person name="Wallis J."/>
            <person name="Babbage A."/>
            <person name="Hammond S."/>
            <person name="Mashreghi-Mohammadi M."/>
            <person name="Barr L."/>
            <person name="Martin S."/>
            <person name="Wray P."/>
            <person name="Ellington A."/>
            <person name="Matthews N."/>
            <person name="Ellwood M."/>
            <person name="Woodmansey R."/>
            <person name="Clark G."/>
            <person name="Cooper J."/>
            <person name="Tromans A."/>
            <person name="Grafham D."/>
            <person name="Skuce C."/>
            <person name="Pandian R."/>
            <person name="Andrews R."/>
            <person name="Harrison E."/>
            <person name="Kimberley A."/>
            <person name="Garnett J."/>
            <person name="Fosker N."/>
            <person name="Hall R."/>
            <person name="Garner P."/>
            <person name="Kelly D."/>
            <person name="Bird C."/>
            <person name="Palmer S."/>
            <person name="Gehring I."/>
            <person name="Berger A."/>
            <person name="Dooley C.M."/>
            <person name="Ersan-Urun Z."/>
            <person name="Eser C."/>
            <person name="Geiger H."/>
            <person name="Geisler M."/>
            <person name="Karotki L."/>
            <person name="Kirn A."/>
            <person name="Konantz J."/>
            <person name="Konantz M."/>
            <person name="Oberlander M."/>
            <person name="Rudolph-Geiger S."/>
            <person name="Teucke M."/>
            <person name="Lanz C."/>
            <person name="Raddatz G."/>
            <person name="Osoegawa K."/>
            <person name="Zhu B."/>
            <person name="Rapp A."/>
            <person name="Widaa S."/>
            <person name="Langford C."/>
            <person name="Yang F."/>
            <person name="Schuster S.C."/>
            <person name="Carter N.P."/>
            <person name="Harrow J."/>
            <person name="Ning Z."/>
            <person name="Herrero J."/>
            <person name="Searle S.M."/>
            <person name="Enright A."/>
            <person name="Geisler R."/>
            <person name="Plasterk R.H."/>
            <person name="Lee C."/>
            <person name="Westerfield M."/>
            <person name="de Jong P.J."/>
            <person name="Zon L.I."/>
            <person name="Postlethwait J.H."/>
            <person name="Nusslein-Volhard C."/>
            <person name="Hubbard T.J."/>
            <person name="Roest Crollius H."/>
            <person name="Rogers J."/>
            <person name="Stemple D.L."/>
        </authorList>
    </citation>
    <scope>NUCLEOTIDE SEQUENCE [LARGE SCALE GENOMIC DNA]</scope>
    <scope>IDENTIFICATION</scope>
    <source>
        <strain>Tuebingen</strain>
    </source>
</reference>
<reference key="2">
    <citation type="submission" date="2003-01" db="EMBL/GenBank/DDBJ databases">
        <authorList>
            <consortium name="NIH - Zebrafish Gene Collection (ZGC) project"/>
        </authorList>
    </citation>
    <scope>NUCLEOTIDE SEQUENCE [LARGE SCALE MRNA]</scope>
    <source>
        <strain>AB</strain>
        <tissue>Embryo</tissue>
    </source>
</reference>
<protein>
    <recommendedName>
        <fullName>Serine incorporator 5</fullName>
    </recommendedName>
</protein>
<accession>Q803X0</accession>
<accession>B2GT27</accession>
<accession>G1K2T1</accession>
<accession>Q6IQA9</accession>
<evidence type="ECO:0000250" key="1">
    <source>
        <dbReference type="UniProtKB" id="Q63175"/>
    </source>
</evidence>
<evidence type="ECO:0000250" key="2">
    <source>
        <dbReference type="UniProtKB" id="Q86VE9"/>
    </source>
</evidence>
<evidence type="ECO:0000255" key="3"/>
<evidence type="ECO:0000303" key="4">
    <source ref="2"/>
</evidence>
<evidence type="ECO:0000305" key="5"/>
<sequence length="460" mass="51983">MCTPCCVSQLACCCGSAACSLCCGCCPKIKQSTSTRFMYALFFMLVTVTCVIMMSPTVEMAMREHIPFYSQMCQQLNAGENCSTLVGYSAVYKVCFGMACFFFFFAVFTIRVQNSTGCRAAVHNGFWFFKFVALLACCAGGFFLPNQDQFLEVWRYVGAAGGFLFIIIQLMLLVQFAHRWNQNWSSGATYNKLWYAALALVTLVLFSVAVGGMVFMFMYYTHPEACFLNKIFLGVNGGLCFIVSLLAISPCIQTFQPTSGLLQPAVITLYVMYLTFSALASKPIEMVEDEIKGNITVCVFPFKSGLKSDTNIVTGVGTAILFCCILYSCLISTTKRSSAALQVYRNDMPENERARCCFCWVDDTEDYDDEKTSGGQNVKYDERDGTVYSYCFFHFVFFLGSLYVMMTVTNWFHYDNAKIERLLEGSWSVFWIKMASSWVCLFFYMWTLVVPMLFPQRFQA</sequence>
<feature type="chain" id="PRO_0000330634" description="Serine incorporator 5">
    <location>
        <begin position="1"/>
        <end position="460"/>
    </location>
</feature>
<feature type="topological domain" description="Extracellular" evidence="3">
    <location>
        <begin position="1"/>
        <end position="36"/>
    </location>
</feature>
<feature type="transmembrane region" description="Helical" evidence="3">
    <location>
        <begin position="37"/>
        <end position="57"/>
    </location>
</feature>
<feature type="topological domain" description="Cytoplasmic" evidence="3">
    <location>
        <begin position="58"/>
        <end position="89"/>
    </location>
</feature>
<feature type="transmembrane region" description="Helical" evidence="3">
    <location>
        <begin position="90"/>
        <end position="110"/>
    </location>
</feature>
<feature type="topological domain" description="Extracellular" evidence="3">
    <location>
        <begin position="111"/>
        <end position="124"/>
    </location>
</feature>
<feature type="transmembrane region" description="Helical" evidence="3">
    <location>
        <begin position="125"/>
        <end position="145"/>
    </location>
</feature>
<feature type="topological domain" description="Cytoplasmic" evidence="3">
    <location>
        <begin position="146"/>
        <end position="156"/>
    </location>
</feature>
<feature type="transmembrane region" description="Helical" evidence="3">
    <location>
        <begin position="157"/>
        <end position="177"/>
    </location>
</feature>
<feature type="topological domain" description="Extracellular" evidence="3">
    <location>
        <begin position="178"/>
        <end position="197"/>
    </location>
</feature>
<feature type="transmembrane region" description="Helical" evidence="3">
    <location>
        <begin position="198"/>
        <end position="218"/>
    </location>
</feature>
<feature type="topological domain" description="Cytoplasmic" evidence="3">
    <location>
        <begin position="219"/>
        <end position="230"/>
    </location>
</feature>
<feature type="transmembrane region" description="Helical" evidence="3">
    <location>
        <begin position="231"/>
        <end position="251"/>
    </location>
</feature>
<feature type="topological domain" description="Extracellular" evidence="3">
    <location>
        <begin position="252"/>
        <end position="259"/>
    </location>
</feature>
<feature type="transmembrane region" description="Helical" evidence="3">
    <location>
        <begin position="260"/>
        <end position="280"/>
    </location>
</feature>
<feature type="topological domain" description="Cytoplasmic" evidence="3">
    <location>
        <begin position="281"/>
        <end position="311"/>
    </location>
</feature>
<feature type="transmembrane region" description="Helical" evidence="3">
    <location>
        <begin position="312"/>
        <end position="332"/>
    </location>
</feature>
<feature type="topological domain" description="Extracellular" evidence="3">
    <location>
        <begin position="333"/>
        <end position="391"/>
    </location>
</feature>
<feature type="transmembrane region" description="Helical" evidence="3">
    <location>
        <begin position="392"/>
        <end position="412"/>
    </location>
</feature>
<feature type="topological domain" description="Cytoplasmic" evidence="3">
    <location>
        <begin position="413"/>
        <end position="433"/>
    </location>
</feature>
<feature type="transmembrane region" description="Helical" evidence="3">
    <location>
        <begin position="434"/>
        <end position="454"/>
    </location>
</feature>
<feature type="topological domain" description="Extracellular" evidence="3">
    <location>
        <begin position="455"/>
        <end position="460"/>
    </location>
</feature>
<feature type="glycosylation site" description="N-linked (GlcNAc...) asparagine" evidence="3">
    <location>
        <position position="114"/>
    </location>
</feature>
<feature type="glycosylation site" description="N-linked (GlcNAc...) asparagine" evidence="3">
    <location>
        <position position="183"/>
    </location>
</feature>
<feature type="sequence conflict" description="In Ref. 2; AAH71500." evidence="5" ref="2">
    <original>A</original>
    <variation>V</variation>
    <location>
        <position position="188"/>
    </location>
</feature>
<feature type="sequence conflict" description="In Ref. 2; AAH71500." evidence="5" ref="2">
    <original>A</original>
    <variation>V</variation>
    <location>
        <position position="199"/>
    </location>
</feature>
<feature type="sequence conflict" description="In Ref. 2; AAH71500." evidence="5" ref="2">
    <original>I</original>
    <variation>T</variation>
    <location>
        <position position="432"/>
    </location>
</feature>
<gene>
    <name type="primary">serinc5</name>
    <name evidence="4" type="ORF">zgc:55396</name>
</gene>
<proteinExistence type="evidence at transcript level"/>
<keyword id="KW-0051">Antiviral defense</keyword>
<keyword id="KW-1003">Cell membrane</keyword>
<keyword id="KW-0325">Glycoprotein</keyword>
<keyword id="KW-0391">Immunity</keyword>
<keyword id="KW-0399">Innate immunity</keyword>
<keyword id="KW-0444">Lipid biosynthesis</keyword>
<keyword id="KW-0443">Lipid metabolism</keyword>
<keyword id="KW-0472">Membrane</keyword>
<keyword id="KW-0594">Phospholipid biosynthesis</keyword>
<keyword id="KW-1208">Phospholipid metabolism</keyword>
<keyword id="KW-1185">Reference proteome</keyword>
<keyword id="KW-0812">Transmembrane</keyword>
<keyword id="KW-1133">Transmembrane helix</keyword>